<reference key="1">
    <citation type="journal article" date="2001" name="Nature">
        <title>Genome sequence of Yersinia pestis, the causative agent of plague.</title>
        <authorList>
            <person name="Parkhill J."/>
            <person name="Wren B.W."/>
            <person name="Thomson N.R."/>
            <person name="Titball R.W."/>
            <person name="Holden M.T.G."/>
            <person name="Prentice M.B."/>
            <person name="Sebaihia M."/>
            <person name="James K.D."/>
            <person name="Churcher C.M."/>
            <person name="Mungall K.L."/>
            <person name="Baker S."/>
            <person name="Basham D."/>
            <person name="Bentley S.D."/>
            <person name="Brooks K."/>
            <person name="Cerdeno-Tarraga A.-M."/>
            <person name="Chillingworth T."/>
            <person name="Cronin A."/>
            <person name="Davies R.M."/>
            <person name="Davis P."/>
            <person name="Dougan G."/>
            <person name="Feltwell T."/>
            <person name="Hamlin N."/>
            <person name="Holroyd S."/>
            <person name="Jagels K."/>
            <person name="Karlyshev A.V."/>
            <person name="Leather S."/>
            <person name="Moule S."/>
            <person name="Oyston P.C.F."/>
            <person name="Quail M.A."/>
            <person name="Rutherford K.M."/>
            <person name="Simmonds M."/>
            <person name="Skelton J."/>
            <person name="Stevens K."/>
            <person name="Whitehead S."/>
            <person name="Barrell B.G."/>
        </authorList>
    </citation>
    <scope>NUCLEOTIDE SEQUENCE [LARGE SCALE GENOMIC DNA]</scope>
    <source>
        <strain>CO-92 / Biovar Orientalis</strain>
    </source>
</reference>
<reference key="2">
    <citation type="journal article" date="2002" name="J. Bacteriol.">
        <title>Genome sequence of Yersinia pestis KIM.</title>
        <authorList>
            <person name="Deng W."/>
            <person name="Burland V."/>
            <person name="Plunkett G. III"/>
            <person name="Boutin A."/>
            <person name="Mayhew G.F."/>
            <person name="Liss P."/>
            <person name="Perna N.T."/>
            <person name="Rose D.J."/>
            <person name="Mau B."/>
            <person name="Zhou S."/>
            <person name="Schwartz D.C."/>
            <person name="Fetherston J.D."/>
            <person name="Lindler L.E."/>
            <person name="Brubaker R.R."/>
            <person name="Plano G.V."/>
            <person name="Straley S.C."/>
            <person name="McDonough K.A."/>
            <person name="Nilles M.L."/>
            <person name="Matson J.S."/>
            <person name="Blattner F.R."/>
            <person name="Perry R.D."/>
        </authorList>
    </citation>
    <scope>NUCLEOTIDE SEQUENCE [LARGE SCALE GENOMIC DNA]</scope>
    <source>
        <strain>KIM10+ / Biovar Mediaevalis</strain>
    </source>
</reference>
<reference key="3">
    <citation type="journal article" date="2004" name="DNA Res.">
        <title>Complete genome sequence of Yersinia pestis strain 91001, an isolate avirulent to humans.</title>
        <authorList>
            <person name="Song Y."/>
            <person name="Tong Z."/>
            <person name="Wang J."/>
            <person name="Wang L."/>
            <person name="Guo Z."/>
            <person name="Han Y."/>
            <person name="Zhang J."/>
            <person name="Pei D."/>
            <person name="Zhou D."/>
            <person name="Qin H."/>
            <person name="Pang X."/>
            <person name="Han Y."/>
            <person name="Zhai J."/>
            <person name="Li M."/>
            <person name="Cui B."/>
            <person name="Qi Z."/>
            <person name="Jin L."/>
            <person name="Dai R."/>
            <person name="Chen F."/>
            <person name="Li S."/>
            <person name="Ye C."/>
            <person name="Du Z."/>
            <person name="Lin W."/>
            <person name="Wang J."/>
            <person name="Yu J."/>
            <person name="Yang H."/>
            <person name="Wang J."/>
            <person name="Huang P."/>
            <person name="Yang R."/>
        </authorList>
    </citation>
    <scope>NUCLEOTIDE SEQUENCE [LARGE SCALE GENOMIC DNA]</scope>
    <source>
        <strain>91001 / Biovar Mediaevalis</strain>
    </source>
</reference>
<sequence length="619" mass="67674">MSLDIAKYPTLALAENPEELRMLPKESLPKLCDELRQYLLTCVSRSSGHFASGLGVVELTVALHYVYNTPFDHLIWDVGHQAYPHKILTGRRDRISTIRQKDGLHPFPWRGESEYDVLSVGHSSTSISAGLGMAVAAEREGKGRRTVCVIGDGAITAGMAFEAMSHAGDIHSDMLVILNDNGMSISENVGGLNNHLAQLLSGKLYASLREGGKKAFSALPPIKDLLKRTEEHLKGMVVPSTLFEELGFNYIGPVDGHDVHTLTQTLKNMRDLKSPQLLHIMTKKGKGYAPAEKDPIGWHAVPKFDPASGTLPKSQSSLPTYSKIFGEWLCETAAKDSKLMAVTPAMREGSGMVRFSREYPQQYFDVAIAEQHAVTFAAGLAIGGYKPVVAIYSTFLQRAYDQLIHDVAIQNLPVLFAIDRGGLVGADGQTHQGAFDLSFMRCIPNMVIMAPSDENECRQMLYTGYHHNGPAAVRYPRGNGTSAVLEPLEMLPIGKGVLRREGEKIAILCFGTLLAQAQLAAENLNATLVDMRFVKPLDEELVLEMAAKHQVLVTVEENAIMGGAGSGVNELLMAKRRWVPVLNIGLPDLFVPQGEQDEMRSELGLDAAGIQRQIEAWLA</sequence>
<accession>Q8ZC45</accession>
<accession>Q0WCA6</accession>
<proteinExistence type="inferred from homology"/>
<organism>
    <name type="scientific">Yersinia pestis</name>
    <dbReference type="NCBI Taxonomy" id="632"/>
    <lineage>
        <taxon>Bacteria</taxon>
        <taxon>Pseudomonadati</taxon>
        <taxon>Pseudomonadota</taxon>
        <taxon>Gammaproteobacteria</taxon>
        <taxon>Enterobacterales</taxon>
        <taxon>Yersiniaceae</taxon>
        <taxon>Yersinia</taxon>
    </lineage>
</organism>
<protein>
    <recommendedName>
        <fullName evidence="1">1-deoxy-D-xylulose-5-phosphate synthase</fullName>
        <ecNumber evidence="1">2.2.1.7</ecNumber>
    </recommendedName>
    <alternativeName>
        <fullName evidence="1">1-deoxyxylulose-5-phosphate synthase</fullName>
        <shortName evidence="1">DXP synthase</shortName>
        <shortName evidence="1">DXPS</shortName>
    </alternativeName>
</protein>
<evidence type="ECO:0000255" key="1">
    <source>
        <dbReference type="HAMAP-Rule" id="MF_00315"/>
    </source>
</evidence>
<dbReference type="EC" id="2.2.1.7" evidence="1"/>
<dbReference type="EMBL" id="AL590842">
    <property type="protein sequence ID" value="CAL21772.1"/>
    <property type="molecule type" value="Genomic_DNA"/>
</dbReference>
<dbReference type="EMBL" id="AE009952">
    <property type="protein sequence ID" value="AAM84589.1"/>
    <property type="molecule type" value="Genomic_DNA"/>
</dbReference>
<dbReference type="EMBL" id="AE017042">
    <property type="protein sequence ID" value="AAS61019.1"/>
    <property type="molecule type" value="Genomic_DNA"/>
</dbReference>
<dbReference type="PIR" id="AI0385">
    <property type="entry name" value="AI0385"/>
</dbReference>
<dbReference type="RefSeq" id="WP_002208662.1">
    <property type="nucleotide sequence ID" value="NZ_WUCM01000043.1"/>
</dbReference>
<dbReference type="RefSeq" id="YP_002348082.1">
    <property type="nucleotide sequence ID" value="NC_003143.1"/>
</dbReference>
<dbReference type="SMR" id="Q8ZC45"/>
<dbReference type="STRING" id="214092.YPO3177"/>
<dbReference type="PaxDb" id="214092-YPO3177"/>
<dbReference type="DNASU" id="1145955"/>
<dbReference type="EnsemblBacteria" id="AAS61019">
    <property type="protein sequence ID" value="AAS61019"/>
    <property type="gene ID" value="YP_0754"/>
</dbReference>
<dbReference type="GeneID" id="57975536"/>
<dbReference type="KEGG" id="ype:YPO3177"/>
<dbReference type="KEGG" id="ypk:y1008"/>
<dbReference type="KEGG" id="ypm:YP_0754"/>
<dbReference type="PATRIC" id="fig|214092.21.peg.3633"/>
<dbReference type="eggNOG" id="COG1154">
    <property type="taxonomic scope" value="Bacteria"/>
</dbReference>
<dbReference type="HOGENOM" id="CLU_009227_1_4_6"/>
<dbReference type="OMA" id="QVGYHAQ"/>
<dbReference type="OrthoDB" id="9803371at2"/>
<dbReference type="UniPathway" id="UPA00064">
    <property type="reaction ID" value="UER00091"/>
</dbReference>
<dbReference type="Proteomes" id="UP000000815">
    <property type="component" value="Chromosome"/>
</dbReference>
<dbReference type="Proteomes" id="UP000001019">
    <property type="component" value="Chromosome"/>
</dbReference>
<dbReference type="Proteomes" id="UP000002490">
    <property type="component" value="Chromosome"/>
</dbReference>
<dbReference type="GO" id="GO:0005829">
    <property type="term" value="C:cytosol"/>
    <property type="evidence" value="ECO:0000318"/>
    <property type="project" value="GO_Central"/>
</dbReference>
<dbReference type="GO" id="GO:0008661">
    <property type="term" value="F:1-deoxy-D-xylulose-5-phosphate synthase activity"/>
    <property type="evidence" value="ECO:0000318"/>
    <property type="project" value="GO_Central"/>
</dbReference>
<dbReference type="GO" id="GO:0000287">
    <property type="term" value="F:magnesium ion binding"/>
    <property type="evidence" value="ECO:0007669"/>
    <property type="project" value="UniProtKB-UniRule"/>
</dbReference>
<dbReference type="GO" id="GO:0030976">
    <property type="term" value="F:thiamine pyrophosphate binding"/>
    <property type="evidence" value="ECO:0007669"/>
    <property type="project" value="UniProtKB-UniRule"/>
</dbReference>
<dbReference type="GO" id="GO:0052865">
    <property type="term" value="P:1-deoxy-D-xylulose 5-phosphate biosynthetic process"/>
    <property type="evidence" value="ECO:0007669"/>
    <property type="project" value="UniProtKB-UniPathway"/>
</dbReference>
<dbReference type="GO" id="GO:0019288">
    <property type="term" value="P:isopentenyl diphosphate biosynthetic process, methylerythritol 4-phosphate pathway"/>
    <property type="evidence" value="ECO:0000318"/>
    <property type="project" value="GO_Central"/>
</dbReference>
<dbReference type="GO" id="GO:0016114">
    <property type="term" value="P:terpenoid biosynthetic process"/>
    <property type="evidence" value="ECO:0007669"/>
    <property type="project" value="UniProtKB-UniRule"/>
</dbReference>
<dbReference type="GO" id="GO:0009228">
    <property type="term" value="P:thiamine biosynthetic process"/>
    <property type="evidence" value="ECO:0007669"/>
    <property type="project" value="UniProtKB-UniRule"/>
</dbReference>
<dbReference type="CDD" id="cd02007">
    <property type="entry name" value="TPP_DXS"/>
    <property type="match status" value="1"/>
</dbReference>
<dbReference type="CDD" id="cd07033">
    <property type="entry name" value="TPP_PYR_DXS_TK_like"/>
    <property type="match status" value="1"/>
</dbReference>
<dbReference type="FunFam" id="3.40.50.920:FF:000002">
    <property type="entry name" value="1-deoxy-D-xylulose-5-phosphate synthase"/>
    <property type="match status" value="1"/>
</dbReference>
<dbReference type="FunFam" id="3.40.50.970:FF:000005">
    <property type="entry name" value="1-deoxy-D-xylulose-5-phosphate synthase"/>
    <property type="match status" value="1"/>
</dbReference>
<dbReference type="Gene3D" id="3.40.50.920">
    <property type="match status" value="1"/>
</dbReference>
<dbReference type="Gene3D" id="3.40.50.970">
    <property type="match status" value="2"/>
</dbReference>
<dbReference type="HAMAP" id="MF_00315">
    <property type="entry name" value="DXP_synth"/>
    <property type="match status" value="1"/>
</dbReference>
<dbReference type="InterPro" id="IPR005477">
    <property type="entry name" value="Dxylulose-5-P_synthase"/>
</dbReference>
<dbReference type="InterPro" id="IPR029061">
    <property type="entry name" value="THDP-binding"/>
</dbReference>
<dbReference type="InterPro" id="IPR009014">
    <property type="entry name" value="Transketo_C/PFOR_II"/>
</dbReference>
<dbReference type="InterPro" id="IPR005475">
    <property type="entry name" value="Transketolase-like_Pyr-bd"/>
</dbReference>
<dbReference type="InterPro" id="IPR020826">
    <property type="entry name" value="Transketolase_BS"/>
</dbReference>
<dbReference type="InterPro" id="IPR033248">
    <property type="entry name" value="Transketolase_C"/>
</dbReference>
<dbReference type="InterPro" id="IPR049557">
    <property type="entry name" value="Transketolase_CS"/>
</dbReference>
<dbReference type="NCBIfam" id="TIGR00204">
    <property type="entry name" value="dxs"/>
    <property type="match status" value="1"/>
</dbReference>
<dbReference type="NCBIfam" id="NF003933">
    <property type="entry name" value="PRK05444.2-2"/>
    <property type="match status" value="1"/>
</dbReference>
<dbReference type="PANTHER" id="PTHR43322">
    <property type="entry name" value="1-D-DEOXYXYLULOSE 5-PHOSPHATE SYNTHASE-RELATED"/>
    <property type="match status" value="1"/>
</dbReference>
<dbReference type="PANTHER" id="PTHR43322:SF5">
    <property type="entry name" value="1-DEOXY-D-XYLULOSE-5-PHOSPHATE SYNTHASE, CHLOROPLASTIC"/>
    <property type="match status" value="1"/>
</dbReference>
<dbReference type="Pfam" id="PF13292">
    <property type="entry name" value="DXP_synthase_N"/>
    <property type="match status" value="1"/>
</dbReference>
<dbReference type="Pfam" id="PF02779">
    <property type="entry name" value="Transket_pyr"/>
    <property type="match status" value="1"/>
</dbReference>
<dbReference type="Pfam" id="PF02780">
    <property type="entry name" value="Transketolase_C"/>
    <property type="match status" value="1"/>
</dbReference>
<dbReference type="SMART" id="SM00861">
    <property type="entry name" value="Transket_pyr"/>
    <property type="match status" value="1"/>
</dbReference>
<dbReference type="SUPFAM" id="SSF52518">
    <property type="entry name" value="Thiamin diphosphate-binding fold (THDP-binding)"/>
    <property type="match status" value="2"/>
</dbReference>
<dbReference type="SUPFAM" id="SSF52922">
    <property type="entry name" value="TK C-terminal domain-like"/>
    <property type="match status" value="1"/>
</dbReference>
<dbReference type="PROSITE" id="PS00801">
    <property type="entry name" value="TRANSKETOLASE_1"/>
    <property type="match status" value="1"/>
</dbReference>
<dbReference type="PROSITE" id="PS00802">
    <property type="entry name" value="TRANSKETOLASE_2"/>
    <property type="match status" value="1"/>
</dbReference>
<comment type="function">
    <text evidence="1">Catalyzes the acyloin condensation reaction between C atoms 2 and 3 of pyruvate and glyceraldehyde 3-phosphate to yield 1-deoxy-D-xylulose-5-phosphate (DXP).</text>
</comment>
<comment type="catalytic activity">
    <reaction evidence="1">
        <text>D-glyceraldehyde 3-phosphate + pyruvate + H(+) = 1-deoxy-D-xylulose 5-phosphate + CO2</text>
        <dbReference type="Rhea" id="RHEA:12605"/>
        <dbReference type="ChEBI" id="CHEBI:15361"/>
        <dbReference type="ChEBI" id="CHEBI:15378"/>
        <dbReference type="ChEBI" id="CHEBI:16526"/>
        <dbReference type="ChEBI" id="CHEBI:57792"/>
        <dbReference type="ChEBI" id="CHEBI:59776"/>
        <dbReference type="EC" id="2.2.1.7"/>
    </reaction>
</comment>
<comment type="cofactor">
    <cofactor evidence="1">
        <name>Mg(2+)</name>
        <dbReference type="ChEBI" id="CHEBI:18420"/>
    </cofactor>
    <text evidence="1">Binds 1 Mg(2+) ion per subunit.</text>
</comment>
<comment type="cofactor">
    <cofactor evidence="1">
        <name>thiamine diphosphate</name>
        <dbReference type="ChEBI" id="CHEBI:58937"/>
    </cofactor>
    <text evidence="1">Binds 1 thiamine pyrophosphate per subunit.</text>
</comment>
<comment type="pathway">
    <text evidence="1">Metabolic intermediate biosynthesis; 1-deoxy-D-xylulose 5-phosphate biosynthesis; 1-deoxy-D-xylulose 5-phosphate from D-glyceraldehyde 3-phosphate and pyruvate: step 1/1.</text>
</comment>
<comment type="subunit">
    <text evidence="1">Homodimer.</text>
</comment>
<comment type="similarity">
    <text evidence="1">Belongs to the transketolase family. DXPS subfamily.</text>
</comment>
<gene>
    <name evidence="1" type="primary">dxs</name>
    <name type="ordered locus">YPO3177</name>
    <name type="ordered locus">y1008</name>
    <name type="ordered locus">YP_0754</name>
</gene>
<name>DXS_YERPE</name>
<keyword id="KW-0414">Isoprene biosynthesis</keyword>
<keyword id="KW-0460">Magnesium</keyword>
<keyword id="KW-0479">Metal-binding</keyword>
<keyword id="KW-1185">Reference proteome</keyword>
<keyword id="KW-0784">Thiamine biosynthesis</keyword>
<keyword id="KW-0786">Thiamine pyrophosphate</keyword>
<keyword id="KW-0808">Transferase</keyword>
<feature type="chain" id="PRO_0000189179" description="1-deoxy-D-xylulose-5-phosphate synthase">
    <location>
        <begin position="1"/>
        <end position="619"/>
    </location>
</feature>
<feature type="binding site" evidence="1">
    <location>
        <position position="80"/>
    </location>
    <ligand>
        <name>thiamine diphosphate</name>
        <dbReference type="ChEBI" id="CHEBI:58937"/>
    </ligand>
</feature>
<feature type="binding site" evidence="1">
    <location>
        <begin position="121"/>
        <end position="123"/>
    </location>
    <ligand>
        <name>thiamine diphosphate</name>
        <dbReference type="ChEBI" id="CHEBI:58937"/>
    </ligand>
</feature>
<feature type="binding site" evidence="1">
    <location>
        <position position="152"/>
    </location>
    <ligand>
        <name>Mg(2+)</name>
        <dbReference type="ChEBI" id="CHEBI:18420"/>
    </ligand>
</feature>
<feature type="binding site" evidence="1">
    <location>
        <begin position="153"/>
        <end position="154"/>
    </location>
    <ligand>
        <name>thiamine diphosphate</name>
        <dbReference type="ChEBI" id="CHEBI:58937"/>
    </ligand>
</feature>
<feature type="binding site" evidence="1">
    <location>
        <position position="181"/>
    </location>
    <ligand>
        <name>Mg(2+)</name>
        <dbReference type="ChEBI" id="CHEBI:18420"/>
    </ligand>
</feature>
<feature type="binding site" evidence="1">
    <location>
        <position position="181"/>
    </location>
    <ligand>
        <name>thiamine diphosphate</name>
        <dbReference type="ChEBI" id="CHEBI:58937"/>
    </ligand>
</feature>
<feature type="binding site" evidence="1">
    <location>
        <position position="288"/>
    </location>
    <ligand>
        <name>thiamine diphosphate</name>
        <dbReference type="ChEBI" id="CHEBI:58937"/>
    </ligand>
</feature>
<feature type="binding site" evidence="1">
    <location>
        <position position="370"/>
    </location>
    <ligand>
        <name>thiamine diphosphate</name>
        <dbReference type="ChEBI" id="CHEBI:58937"/>
    </ligand>
</feature>